<name>3HAO_BRUA4</name>
<protein>
    <recommendedName>
        <fullName evidence="1">3-hydroxyanthranilate 3,4-dioxygenase</fullName>
        <ecNumber evidence="1">1.13.11.6</ecNumber>
    </recommendedName>
    <alternativeName>
        <fullName evidence="1">3-hydroxyanthranilate oxygenase</fullName>
        <shortName evidence="1">3-HAO</shortName>
    </alternativeName>
    <alternativeName>
        <fullName evidence="1">3-hydroxyanthranilic acid dioxygenase</fullName>
        <shortName evidence="1">HAD</shortName>
    </alternativeName>
</protein>
<evidence type="ECO:0000255" key="1">
    <source>
        <dbReference type="HAMAP-Rule" id="MF_00825"/>
    </source>
</evidence>
<accession>A6X798</accession>
<proteinExistence type="inferred from homology"/>
<gene>
    <name evidence="1" type="primary">nbaC</name>
    <name type="ordered locus">Oant_4402</name>
</gene>
<comment type="function">
    <text evidence="1">Catalyzes the oxidative ring opening of 3-hydroxyanthranilate to 2-amino-3-carboxymuconate semialdehyde, which spontaneously cyclizes to quinolinate.</text>
</comment>
<comment type="catalytic activity">
    <reaction evidence="1">
        <text>3-hydroxyanthranilate + O2 = (2Z,4Z)-2-amino-3-carboxymuconate 6-semialdehyde</text>
        <dbReference type="Rhea" id="RHEA:17953"/>
        <dbReference type="ChEBI" id="CHEBI:15379"/>
        <dbReference type="ChEBI" id="CHEBI:36559"/>
        <dbReference type="ChEBI" id="CHEBI:77612"/>
        <dbReference type="EC" id="1.13.11.6"/>
    </reaction>
</comment>
<comment type="cofactor">
    <cofactor evidence="1">
        <name>Fe(2+)</name>
        <dbReference type="ChEBI" id="CHEBI:29033"/>
    </cofactor>
    <text evidence="1">Binds 2 Fe(2+) ions per subunit.</text>
</comment>
<comment type="pathway">
    <text evidence="1">Cofactor biosynthesis; NAD(+) biosynthesis; quinolinate from L-kynurenine: step 3/3.</text>
</comment>
<comment type="subunit">
    <text evidence="1">Homodimer.</text>
</comment>
<comment type="similarity">
    <text evidence="1">Belongs to the 3-HAO family.</text>
</comment>
<sequence length="182" mass="20693">MTKLSAFNFQKWIDEHKHLLKPPVGNQLVFKDADLMVTVVGGPNKRTDYHDDPVEEFFYQLKGDMLLKLHDTSTGEFYDVPIREGDIFLLPAHIRHSPQRPQEGSIGLVIEPARPEGVLDAVEWYCFECSGLVHRAEVDLESIVDDLPPLYAAFYNDEKLRTCPHCNTVHPGKNPPEGWVAL</sequence>
<keyword id="KW-0223">Dioxygenase</keyword>
<keyword id="KW-0408">Iron</keyword>
<keyword id="KW-0479">Metal-binding</keyword>
<keyword id="KW-0560">Oxidoreductase</keyword>
<keyword id="KW-0662">Pyridine nucleotide biosynthesis</keyword>
<keyword id="KW-1185">Reference proteome</keyword>
<feature type="chain" id="PRO_0000309576" description="3-hydroxyanthranilate 3,4-dioxygenase">
    <location>
        <begin position="1"/>
        <end position="182"/>
    </location>
</feature>
<feature type="binding site" evidence="1">
    <location>
        <position position="46"/>
    </location>
    <ligand>
        <name>O2</name>
        <dbReference type="ChEBI" id="CHEBI:15379"/>
    </ligand>
</feature>
<feature type="binding site" evidence="1">
    <location>
        <position position="50"/>
    </location>
    <ligand>
        <name>Fe cation</name>
        <dbReference type="ChEBI" id="CHEBI:24875"/>
        <label>1</label>
        <note>catalytic</note>
    </ligand>
</feature>
<feature type="binding site" evidence="1">
    <location>
        <position position="56"/>
    </location>
    <ligand>
        <name>Fe cation</name>
        <dbReference type="ChEBI" id="CHEBI:24875"/>
        <label>1</label>
        <note>catalytic</note>
    </ligand>
</feature>
<feature type="binding site" evidence="1">
    <location>
        <position position="56"/>
    </location>
    <ligand>
        <name>substrate</name>
    </ligand>
</feature>
<feature type="binding site" evidence="1">
    <location>
        <position position="96"/>
    </location>
    <ligand>
        <name>Fe cation</name>
        <dbReference type="ChEBI" id="CHEBI:24875"/>
        <label>1</label>
        <note>catalytic</note>
    </ligand>
</feature>
<feature type="binding site" evidence="1">
    <location>
        <position position="100"/>
    </location>
    <ligand>
        <name>substrate</name>
    </ligand>
</feature>
<feature type="binding site" evidence="1">
    <location>
        <position position="111"/>
    </location>
    <ligand>
        <name>substrate</name>
    </ligand>
</feature>
<feature type="binding site" evidence="1">
    <location>
        <position position="126"/>
    </location>
    <ligand>
        <name>Fe cation</name>
        <dbReference type="ChEBI" id="CHEBI:24875"/>
        <label>2</label>
    </ligand>
</feature>
<feature type="binding site" evidence="1">
    <location>
        <position position="129"/>
    </location>
    <ligand>
        <name>Fe cation</name>
        <dbReference type="ChEBI" id="CHEBI:24875"/>
        <label>2</label>
    </ligand>
</feature>
<feature type="binding site" evidence="1">
    <location>
        <position position="163"/>
    </location>
    <ligand>
        <name>Fe cation</name>
        <dbReference type="ChEBI" id="CHEBI:24875"/>
        <label>2</label>
    </ligand>
</feature>
<feature type="binding site" evidence="1">
    <location>
        <position position="166"/>
    </location>
    <ligand>
        <name>Fe cation</name>
        <dbReference type="ChEBI" id="CHEBI:24875"/>
        <label>2</label>
    </ligand>
</feature>
<organism>
    <name type="scientific">Brucella anthropi (strain ATCC 49188 / DSM 6882 / CCUG 24695 / JCM 21032 / LMG 3331 / NBRC 15819 / NCTC 12168 / Alc 37)</name>
    <name type="common">Ochrobactrum anthropi</name>
    <dbReference type="NCBI Taxonomy" id="439375"/>
    <lineage>
        <taxon>Bacteria</taxon>
        <taxon>Pseudomonadati</taxon>
        <taxon>Pseudomonadota</taxon>
        <taxon>Alphaproteobacteria</taxon>
        <taxon>Hyphomicrobiales</taxon>
        <taxon>Brucellaceae</taxon>
        <taxon>Brucella/Ochrobactrum group</taxon>
        <taxon>Brucella</taxon>
    </lineage>
</organism>
<reference key="1">
    <citation type="journal article" date="2011" name="J. Bacteriol.">
        <title>Genome of Ochrobactrum anthropi ATCC 49188 T, a versatile opportunistic pathogen and symbiont of several eukaryotic hosts.</title>
        <authorList>
            <person name="Chain P.S."/>
            <person name="Lang D.M."/>
            <person name="Comerci D.J."/>
            <person name="Malfatti S.A."/>
            <person name="Vergez L.M."/>
            <person name="Shin M."/>
            <person name="Ugalde R.A."/>
            <person name="Garcia E."/>
            <person name="Tolmasky M.E."/>
        </authorList>
    </citation>
    <scope>NUCLEOTIDE SEQUENCE [LARGE SCALE GENOMIC DNA]</scope>
    <source>
        <strain>ATCC 49188 / DSM 6882 / CCUG 24695 / JCM 21032 / LMG 3331 / NBRC 15819 / NCTC 12168 / Alc 37</strain>
    </source>
</reference>
<dbReference type="EC" id="1.13.11.6" evidence="1"/>
<dbReference type="EMBL" id="CP000759">
    <property type="protein sequence ID" value="ABS17102.1"/>
    <property type="molecule type" value="Genomic_DNA"/>
</dbReference>
<dbReference type="RefSeq" id="WP_010660590.1">
    <property type="nucleotide sequence ID" value="NC_009668.1"/>
</dbReference>
<dbReference type="SMR" id="A6X798"/>
<dbReference type="STRING" id="439375.Oant_4402"/>
<dbReference type="KEGG" id="oan:Oant_4402"/>
<dbReference type="eggNOG" id="COG1917">
    <property type="taxonomic scope" value="Bacteria"/>
</dbReference>
<dbReference type="HOGENOM" id="CLU_095765_0_0_5"/>
<dbReference type="UniPathway" id="UPA00253">
    <property type="reaction ID" value="UER00330"/>
</dbReference>
<dbReference type="Proteomes" id="UP000002301">
    <property type="component" value="Chromosome 2"/>
</dbReference>
<dbReference type="GO" id="GO:0000334">
    <property type="term" value="F:3-hydroxyanthranilate 3,4-dioxygenase activity"/>
    <property type="evidence" value="ECO:0007669"/>
    <property type="project" value="UniProtKB-UniRule"/>
</dbReference>
<dbReference type="GO" id="GO:0008198">
    <property type="term" value="F:ferrous iron binding"/>
    <property type="evidence" value="ECO:0007669"/>
    <property type="project" value="UniProtKB-UniRule"/>
</dbReference>
<dbReference type="GO" id="GO:0043420">
    <property type="term" value="P:anthranilate metabolic process"/>
    <property type="evidence" value="ECO:0007669"/>
    <property type="project" value="UniProtKB-UniRule"/>
</dbReference>
<dbReference type="GO" id="GO:0006569">
    <property type="term" value="P:L-tryptophan catabolic process"/>
    <property type="evidence" value="ECO:0007669"/>
    <property type="project" value="UniProtKB-UniRule"/>
</dbReference>
<dbReference type="GO" id="GO:0009435">
    <property type="term" value="P:NAD biosynthetic process"/>
    <property type="evidence" value="ECO:0007669"/>
    <property type="project" value="UniProtKB-UniPathway"/>
</dbReference>
<dbReference type="GO" id="GO:0019805">
    <property type="term" value="P:quinolinate biosynthetic process"/>
    <property type="evidence" value="ECO:0007669"/>
    <property type="project" value="UniProtKB-UniRule"/>
</dbReference>
<dbReference type="CDD" id="cd06123">
    <property type="entry name" value="cupin_HAO"/>
    <property type="match status" value="1"/>
</dbReference>
<dbReference type="Gene3D" id="2.60.120.10">
    <property type="entry name" value="Jelly Rolls"/>
    <property type="match status" value="1"/>
</dbReference>
<dbReference type="HAMAP" id="MF_00825">
    <property type="entry name" value="3_HAO"/>
    <property type="match status" value="1"/>
</dbReference>
<dbReference type="InterPro" id="IPR010329">
    <property type="entry name" value="3hydroanth_dOase"/>
</dbReference>
<dbReference type="InterPro" id="IPR014710">
    <property type="entry name" value="RmlC-like_jellyroll"/>
</dbReference>
<dbReference type="InterPro" id="IPR011051">
    <property type="entry name" value="RmlC_Cupin_sf"/>
</dbReference>
<dbReference type="NCBIfam" id="TIGR03037">
    <property type="entry name" value="anthran_nbaC"/>
    <property type="match status" value="1"/>
</dbReference>
<dbReference type="NCBIfam" id="NF009763">
    <property type="entry name" value="PRK13264.1"/>
    <property type="match status" value="1"/>
</dbReference>
<dbReference type="PANTHER" id="PTHR15497">
    <property type="entry name" value="3-HYDROXYANTHRANILATE 3,4-DIOXYGENASE"/>
    <property type="match status" value="1"/>
</dbReference>
<dbReference type="PANTHER" id="PTHR15497:SF1">
    <property type="entry name" value="3-HYDROXYANTHRANILATE 3,4-DIOXYGENASE"/>
    <property type="match status" value="1"/>
</dbReference>
<dbReference type="Pfam" id="PF06052">
    <property type="entry name" value="3-HAO"/>
    <property type="match status" value="1"/>
</dbReference>
<dbReference type="SUPFAM" id="SSF51182">
    <property type="entry name" value="RmlC-like cupins"/>
    <property type="match status" value="1"/>
</dbReference>